<gene>
    <name evidence="20" type="primary">PPN1</name>
    <name evidence="19" type="synonym">PHM5</name>
    <name evidence="26" type="ordered locus">YDR452W</name>
    <name type="ORF">D9461.37</name>
</gene>
<reference key="1">
    <citation type="journal article" date="2001" name="Proc. Natl. Acad. Sci. U.S.A.">
        <title>The endopolyphosphatase gene: essential in Saccharomyces cerevisiae.</title>
        <authorList>
            <person name="Sethuraman A."/>
            <person name="Rao N.N."/>
            <person name="Kornberg A."/>
        </authorList>
    </citation>
    <scope>NUCLEOTIDE SEQUENCE [GENOMIC DNA]</scope>
    <scope>PROTEIN SEQUENCE OF 184-212</scope>
    <scope>FUNCTION</scope>
    <scope>PROTEOLYTIC PROCESSING</scope>
    <source>
        <strain>ATCC 208353 / W303-1A</strain>
    </source>
</reference>
<reference key="2">
    <citation type="journal article" date="1997" name="Nature">
        <title>The nucleotide sequence of Saccharomyces cerevisiae chromosome IV.</title>
        <authorList>
            <person name="Jacq C."/>
            <person name="Alt-Moerbe J."/>
            <person name="Andre B."/>
            <person name="Arnold W."/>
            <person name="Bahr A."/>
            <person name="Ballesta J.P.G."/>
            <person name="Bargues M."/>
            <person name="Baron L."/>
            <person name="Becker A."/>
            <person name="Biteau N."/>
            <person name="Bloecker H."/>
            <person name="Blugeon C."/>
            <person name="Boskovic J."/>
            <person name="Brandt P."/>
            <person name="Brueckner M."/>
            <person name="Buitrago M.J."/>
            <person name="Coster F."/>
            <person name="Delaveau T."/>
            <person name="del Rey F."/>
            <person name="Dujon B."/>
            <person name="Eide L.G."/>
            <person name="Garcia-Cantalejo J.M."/>
            <person name="Goffeau A."/>
            <person name="Gomez-Peris A."/>
            <person name="Granotier C."/>
            <person name="Hanemann V."/>
            <person name="Hankeln T."/>
            <person name="Hoheisel J.D."/>
            <person name="Jaeger W."/>
            <person name="Jimenez A."/>
            <person name="Jonniaux J.-L."/>
            <person name="Kraemer C."/>
            <person name="Kuester H."/>
            <person name="Laamanen P."/>
            <person name="Legros Y."/>
            <person name="Louis E.J."/>
            <person name="Moeller-Rieker S."/>
            <person name="Monnet A."/>
            <person name="Moro M."/>
            <person name="Mueller-Auer S."/>
            <person name="Nussbaumer B."/>
            <person name="Paricio N."/>
            <person name="Paulin L."/>
            <person name="Perea J."/>
            <person name="Perez-Alonso M."/>
            <person name="Perez-Ortin J.E."/>
            <person name="Pohl T.M."/>
            <person name="Prydz H."/>
            <person name="Purnelle B."/>
            <person name="Rasmussen S.W."/>
            <person name="Remacha M.A."/>
            <person name="Revuelta J.L."/>
            <person name="Rieger M."/>
            <person name="Salom D."/>
            <person name="Saluz H.P."/>
            <person name="Saiz J.E."/>
            <person name="Saren A.-M."/>
            <person name="Schaefer M."/>
            <person name="Scharfe M."/>
            <person name="Schmidt E.R."/>
            <person name="Schneider C."/>
            <person name="Scholler P."/>
            <person name="Schwarz S."/>
            <person name="Soler-Mira A."/>
            <person name="Urrestarazu L.A."/>
            <person name="Verhasselt P."/>
            <person name="Vissers S."/>
            <person name="Voet M."/>
            <person name="Volckaert G."/>
            <person name="Wagner G."/>
            <person name="Wambutt R."/>
            <person name="Wedler E."/>
            <person name="Wedler H."/>
            <person name="Woelfl S."/>
            <person name="Harris D.E."/>
            <person name="Bowman S."/>
            <person name="Brown D."/>
            <person name="Churcher C.M."/>
            <person name="Connor R."/>
            <person name="Dedman K."/>
            <person name="Gentles S."/>
            <person name="Hamlin N."/>
            <person name="Hunt S."/>
            <person name="Jones L."/>
            <person name="McDonald S."/>
            <person name="Murphy L.D."/>
            <person name="Niblett D."/>
            <person name="Odell C."/>
            <person name="Oliver K."/>
            <person name="Rajandream M.A."/>
            <person name="Richards C."/>
            <person name="Shore L."/>
            <person name="Walsh S.V."/>
            <person name="Barrell B.G."/>
            <person name="Dietrich F.S."/>
            <person name="Mulligan J.T."/>
            <person name="Allen E."/>
            <person name="Araujo R."/>
            <person name="Aviles E."/>
            <person name="Berno A."/>
            <person name="Carpenter J."/>
            <person name="Chen E."/>
            <person name="Cherry J.M."/>
            <person name="Chung E."/>
            <person name="Duncan M."/>
            <person name="Hunicke-Smith S."/>
            <person name="Hyman R.W."/>
            <person name="Komp C."/>
            <person name="Lashkari D."/>
            <person name="Lew H."/>
            <person name="Lin D."/>
            <person name="Mosedale D."/>
            <person name="Nakahara K."/>
            <person name="Namath A."/>
            <person name="Oefner P."/>
            <person name="Oh C."/>
            <person name="Petel F.X."/>
            <person name="Roberts D."/>
            <person name="Schramm S."/>
            <person name="Schroeder M."/>
            <person name="Shogren T."/>
            <person name="Shroff N."/>
            <person name="Winant A."/>
            <person name="Yelton M.A."/>
            <person name="Botstein D."/>
            <person name="Davis R.W."/>
            <person name="Johnston M."/>
            <person name="Andrews S."/>
            <person name="Brinkman R."/>
            <person name="Cooper J."/>
            <person name="Ding H."/>
            <person name="Du Z."/>
            <person name="Favello A."/>
            <person name="Fulton L."/>
            <person name="Gattung S."/>
            <person name="Greco T."/>
            <person name="Hallsworth K."/>
            <person name="Hawkins J."/>
            <person name="Hillier L.W."/>
            <person name="Jier M."/>
            <person name="Johnson D."/>
            <person name="Johnston L."/>
            <person name="Kirsten J."/>
            <person name="Kucaba T."/>
            <person name="Langston Y."/>
            <person name="Latreille P."/>
            <person name="Le T."/>
            <person name="Mardis E."/>
            <person name="Menezes S."/>
            <person name="Miller N."/>
            <person name="Nhan M."/>
            <person name="Pauley A."/>
            <person name="Peluso D."/>
            <person name="Rifkin L."/>
            <person name="Riles L."/>
            <person name="Taich A."/>
            <person name="Trevaskis E."/>
            <person name="Vignati D."/>
            <person name="Wilcox L."/>
            <person name="Wohldman P."/>
            <person name="Vaudin M."/>
            <person name="Wilson R."/>
            <person name="Waterston R."/>
            <person name="Albermann K."/>
            <person name="Hani J."/>
            <person name="Heumann K."/>
            <person name="Kleine K."/>
            <person name="Mewes H.-W."/>
            <person name="Zollner A."/>
            <person name="Zaccaria P."/>
        </authorList>
    </citation>
    <scope>NUCLEOTIDE SEQUENCE [LARGE SCALE GENOMIC DNA]</scope>
    <source>
        <strain>ATCC 204508 / S288c</strain>
    </source>
</reference>
<reference key="3">
    <citation type="journal article" date="2014" name="G3 (Bethesda)">
        <title>The reference genome sequence of Saccharomyces cerevisiae: Then and now.</title>
        <authorList>
            <person name="Engel S.R."/>
            <person name="Dietrich F.S."/>
            <person name="Fisk D.G."/>
            <person name="Binkley G."/>
            <person name="Balakrishnan R."/>
            <person name="Costanzo M.C."/>
            <person name="Dwight S.S."/>
            <person name="Hitz B.C."/>
            <person name="Karra K."/>
            <person name="Nash R.S."/>
            <person name="Weng S."/>
            <person name="Wong E.D."/>
            <person name="Lloyd P."/>
            <person name="Skrzypek M.S."/>
            <person name="Miyasato S.R."/>
            <person name="Simison M."/>
            <person name="Cherry J.M."/>
        </authorList>
    </citation>
    <scope>GENOME REANNOTATION</scope>
    <source>
        <strain>ATCC 204508 / S288c</strain>
    </source>
</reference>
<reference key="4">
    <citation type="journal article" date="2005" name="FEBS Lett.">
        <title>Endopolyphosphatase in Saccharomyces cerevisiae undergoes post-translational activations to produce short-chain polyphosphates.</title>
        <authorList>
            <person name="Shi X."/>
            <person name="Kornberg A."/>
        </authorList>
    </citation>
    <scope>PROTEIN SEQUENCE OF 84-95 AND 381-384</scope>
    <scope>FUNCTION</scope>
    <scope>CATALYTIC ACTIVITY</scope>
    <scope>GLYCOSYLATION</scope>
    <scope>PROTEOLYTIC PROCESSING</scope>
    <scope>MUTAGENESIS OF ASN-11; ASN-505 AND ASN-511</scope>
</reference>
<reference key="5">
    <citation type="journal article" date="2006" name="Biochemistry (Mosc.)">
        <title>High molecular mass exopolyphosphatase from the cytosol of the yeast Saccharomyces cerevisiae is encoded by the PPN1 gene.</title>
        <authorList>
            <person name="Andreeva N.A."/>
            <person name="Kulakovskaya T.V."/>
            <person name="Kulaev I.S."/>
        </authorList>
    </citation>
    <scope>PROTEIN SEQUENCE OF 97-126; 184-198; 243-258; 320-334 AND 580-605</scope>
    <scope>SUBCELLULAR LOCATION</scope>
</reference>
<reference key="6">
    <citation type="journal article" date="1996" name="J. Biol. Chem.">
        <title>Endopolyphosphatases for long chain inorganic polyphosphate in yeast and mammals.</title>
        <authorList>
            <person name="Kumble K.D."/>
            <person name="Kornberg A."/>
        </authorList>
    </citation>
    <scope>FUNCTION</scope>
    <scope>SUBCELLULAR LOCATION</scope>
    <scope>COFACTOR</scope>
    <scope>BIOPHYSICOCHEMICAL PROPERTIES</scope>
</reference>
<reference key="7">
    <citation type="journal article" date="2000" name="Mol. Biol. Cell">
        <title>New components of a system for phosphate accumulation and polyphosphate metabolism in Saccharomyces cerevisiae revealed by genomic expression analysis.</title>
        <authorList>
            <person name="Ogawa N."/>
            <person name="DeRisi J.L."/>
            <person name="Brown P.O."/>
        </authorList>
    </citation>
    <scope>FUNCTION</scope>
</reference>
<reference key="8">
    <citation type="journal article" date="2001" name="EMBO J.">
        <title>Sorting of proteins into multivesicular bodies: ubiquitin-dependent and -independent targeting.</title>
        <authorList>
            <person name="Reggiori F."/>
            <person name="Pelham H.R.B."/>
        </authorList>
    </citation>
    <scope>IDENTIFICATION BY MASS SPECTROMETRY</scope>
    <scope>SUBCELLULAR LOCATION</scope>
    <scope>UBIQUITINATION AT LYS-6</scope>
    <scope>MUTAGENESIS OF LYS-6</scope>
</reference>
<reference key="9">
    <citation type="journal article" date="2002" name="Nat. Cell Biol.">
        <title>A transmembrane ubiquitin ligase required to sort membrane proteins into multivesicular bodies.</title>
        <authorList>
            <person name="Reggiori F."/>
            <person name="Pelham H.R.B."/>
        </authorList>
    </citation>
    <scope>SUBCELLULAR LOCATION</scope>
    <scope>ROLE OF UBIQUITINATION</scope>
</reference>
<reference key="10">
    <citation type="journal article" date="2003" name="Nature">
        <title>Global analysis of protein localization in budding yeast.</title>
        <authorList>
            <person name="Huh W.-K."/>
            <person name="Falvo J.V."/>
            <person name="Gerke L.C."/>
            <person name="Carroll A.S."/>
            <person name="Howson R.W."/>
            <person name="Weissman J.S."/>
            <person name="O'Shea E.K."/>
        </authorList>
    </citation>
    <scope>SUBCELLULAR LOCATION [LARGE SCALE ANALYSIS]</scope>
</reference>
<reference key="11">
    <citation type="journal article" date="2003" name="Nature">
        <title>Global analysis of protein expression in yeast.</title>
        <authorList>
            <person name="Ghaemmaghami S."/>
            <person name="Huh W.-K."/>
            <person name="Bower K."/>
            <person name="Howson R.W."/>
            <person name="Belle A."/>
            <person name="Dephoure N."/>
            <person name="O'Shea E.K."/>
            <person name="Weissman J.S."/>
        </authorList>
    </citation>
    <scope>LEVEL OF PROTEIN EXPRESSION [LARGE SCALE ANALYSIS]</scope>
</reference>
<reference key="12">
    <citation type="journal article" date="2004" name="Biochim. Biophys. Acta">
        <title>Inactivation of endopolyphosphatase gene PPN1 results in inhibition of expression of exopolyphosphatase PPX1 and high-molecular-mass exopolyphosphatase not encoded by PPX1 in Saccharomyces cerevisiae.</title>
        <authorList>
            <person name="Lichko L."/>
            <person name="Kulakovskaya T."/>
            <person name="Kulaev I."/>
        </authorList>
    </citation>
    <scope>FUNCTION</scope>
</reference>
<reference key="13">
    <citation type="journal article" date="2004" name="Biochemistry (Mosc.)">
        <title>Purification and properties of exopolyphosphatase from the cytosol of Saccharomyces cerevisiae not encoded by the PPX1 gene.</title>
        <authorList>
            <person name="Andreeva N.A."/>
            <person name="Kulakovskaya T.V."/>
            <person name="Kulaev I.S."/>
        </authorList>
    </citation>
    <scope>FUNCTION</scope>
    <scope>CATALYTIC ACTIVITY</scope>
    <scope>ACTIVITY REGULATION</scope>
    <scope>BIOPHYSICOCHEMICAL PROPERTIES</scope>
</reference>
<reference key="14">
    <citation type="journal article" date="2004" name="Traffic">
        <title>The ubiquitin ligase Rsp5p is required for modification and sorting of membrane proteins into multivesicular bodies.</title>
        <authorList>
            <person name="Morvan J."/>
            <person name="Froissard M."/>
            <person name="Haguenauer-Tsapis R."/>
            <person name="Urban-Grimal D."/>
        </authorList>
    </citation>
    <scope>SUBCELLULAR LOCATION</scope>
    <scope>ROLE OF UBIQUITINATION</scope>
</reference>
<reference key="15">
    <citation type="journal article" date="2015" name="PLoS ONE">
        <title>Polyphosphatase PPN1 of Saccharomyces cerevisiae: switching of exopolyphosphatase and endopolyphosphatase activities.</title>
        <authorList>
            <person name="Andreeva N."/>
            <person name="Trilisenko L."/>
            <person name="Eldarov M."/>
            <person name="Kulakovskaya T."/>
        </authorList>
    </citation>
    <scope>COFACTOR</scope>
</reference>
<reference key="16">
    <citation type="journal article" date="2016" name="Adv. Enzyme Res.">
        <title>Polyphosphatase PPN1 of Saccharomyces cerevisiae is a deoxyadenosine triphosphate phosphohydrolase.</title>
        <authorList>
            <person name="Andreeva N."/>
            <person name="Trilisenko L."/>
            <person name="Eldarov M."/>
            <person name="Kulakovskaya T."/>
        </authorList>
    </citation>
    <scope>FUNCTION</scope>
    <scope>CATALYTIC ACTIVITY</scope>
    <scope>COFACTOR</scope>
    <scope>BIOPHYSICOCHEMICAL PROPERTIES</scope>
</reference>
<reference key="17">
    <citation type="journal article" date="2017" name="J. Cell Sci.">
        <title>Ppn2, a novel Zn2+-dependent polyphosphatase in the acidocalcisome-like yeast vacuole.</title>
        <authorList>
            <person name="Gerasimaite R."/>
            <person name="Mayer A."/>
        </authorList>
    </citation>
    <scope>INTERACTION WITH PPN2</scope>
</reference>
<reference key="18">
    <citation type="journal article" date="2019" name="Biochimie">
        <title>Ppn2 endopolyphosphatase overexpressed in Saccharomyces cerevisiae: Comparison with Ppn1, Ppx1, and Ddp1 polyphosphatases.</title>
        <authorList>
            <person name="Andreeva N."/>
            <person name="Ledova L."/>
            <person name="Ryazanova L."/>
            <person name="Tomashevsky A."/>
            <person name="Kulakovskaya T."/>
            <person name="Eldarov M."/>
        </authorList>
    </citation>
    <scope>FUNCTION</scope>
    <scope>CATALYTIC ACTIVITY</scope>
    <scope>BIOPHYSICOCHEMICAL PROPERTIES</scope>
    <scope>ACTIVITY REGULATION</scope>
    <scope>COFACTOR</scope>
</reference>
<dbReference type="EC" id="3.6.1.10" evidence="12"/>
<dbReference type="EC" id="3.6.1.-" evidence="18"/>
<dbReference type="EC" id="3.6.1.11" evidence="10"/>
<dbReference type="EMBL" id="AF322107">
    <property type="protein sequence ID" value="AAG37278.1"/>
    <property type="molecule type" value="Genomic_DNA"/>
</dbReference>
<dbReference type="EMBL" id="U33007">
    <property type="protein sequence ID" value="AAB64872.1"/>
    <property type="molecule type" value="Genomic_DNA"/>
</dbReference>
<dbReference type="EMBL" id="BK006938">
    <property type="protein sequence ID" value="DAA12287.1"/>
    <property type="molecule type" value="Genomic_DNA"/>
</dbReference>
<dbReference type="PIR" id="S69731">
    <property type="entry name" value="S69731"/>
</dbReference>
<dbReference type="RefSeq" id="NP_010740.3">
    <property type="nucleotide sequence ID" value="NM_001180760.3"/>
</dbReference>
<dbReference type="SMR" id="Q04119"/>
<dbReference type="BioGRID" id="32507">
    <property type="interactions" value="85"/>
</dbReference>
<dbReference type="DIP" id="DIP-2584N"/>
<dbReference type="FunCoup" id="Q04119">
    <property type="interactions" value="321"/>
</dbReference>
<dbReference type="IntAct" id="Q04119">
    <property type="interactions" value="18"/>
</dbReference>
<dbReference type="MINT" id="Q04119"/>
<dbReference type="STRING" id="4932.YDR452W"/>
<dbReference type="GlyCosmos" id="Q04119">
    <property type="glycosylation" value="3 sites, No reported glycans"/>
</dbReference>
<dbReference type="GlyGen" id="Q04119">
    <property type="glycosylation" value="3 sites"/>
</dbReference>
<dbReference type="iPTMnet" id="Q04119"/>
<dbReference type="PaxDb" id="4932-YDR452W"/>
<dbReference type="PeptideAtlas" id="Q04119"/>
<dbReference type="EnsemblFungi" id="YDR452W_mRNA">
    <property type="protein sequence ID" value="YDR452W"/>
    <property type="gene ID" value="YDR452W"/>
</dbReference>
<dbReference type="GeneID" id="852063"/>
<dbReference type="KEGG" id="sce:YDR452W"/>
<dbReference type="AGR" id="SGD:S000002860"/>
<dbReference type="SGD" id="S000002860">
    <property type="gene designation" value="PPN1"/>
</dbReference>
<dbReference type="VEuPathDB" id="FungiDB:YDR452W"/>
<dbReference type="eggNOG" id="KOG3770">
    <property type="taxonomic scope" value="Eukaryota"/>
</dbReference>
<dbReference type="GeneTree" id="ENSGT00950000183182"/>
<dbReference type="HOGENOM" id="CLU_013424_1_0_1"/>
<dbReference type="InParanoid" id="Q04119"/>
<dbReference type="OMA" id="WAERYSV"/>
<dbReference type="OrthoDB" id="348678at2759"/>
<dbReference type="BioCyc" id="YEAST:G3O-29983-MONOMER"/>
<dbReference type="BRENDA" id="3.6.1.10">
    <property type="organism ID" value="984"/>
</dbReference>
<dbReference type="BRENDA" id="3.6.1.11">
    <property type="organism ID" value="984"/>
</dbReference>
<dbReference type="BioGRID-ORCS" id="852063">
    <property type="hits" value="2 hits in 10 CRISPR screens"/>
</dbReference>
<dbReference type="PRO" id="PR:Q04119"/>
<dbReference type="Proteomes" id="UP000002311">
    <property type="component" value="Chromosome IV"/>
</dbReference>
<dbReference type="RNAct" id="Q04119">
    <property type="molecule type" value="protein"/>
</dbReference>
<dbReference type="GO" id="GO:0005829">
    <property type="term" value="C:cytosol"/>
    <property type="evidence" value="ECO:0000314"/>
    <property type="project" value="SGD"/>
</dbReference>
<dbReference type="GO" id="GO:0000324">
    <property type="term" value="C:fungal-type vacuole"/>
    <property type="evidence" value="ECO:0007005"/>
    <property type="project" value="SGD"/>
</dbReference>
<dbReference type="GO" id="GO:0000329">
    <property type="term" value="C:fungal-type vacuole membrane"/>
    <property type="evidence" value="ECO:0000314"/>
    <property type="project" value="SGD"/>
</dbReference>
<dbReference type="GO" id="GO:0005634">
    <property type="term" value="C:nucleus"/>
    <property type="evidence" value="ECO:0000315"/>
    <property type="project" value="SGD"/>
</dbReference>
<dbReference type="GO" id="GO:0000298">
    <property type="term" value="F:endopolyphosphatase activity"/>
    <property type="evidence" value="ECO:0000314"/>
    <property type="project" value="SGD"/>
</dbReference>
<dbReference type="GO" id="GO:0004309">
    <property type="term" value="F:exopolyphosphatase activity"/>
    <property type="evidence" value="ECO:0000314"/>
    <property type="project" value="SGD"/>
</dbReference>
<dbReference type="GO" id="GO:0046872">
    <property type="term" value="F:metal ion binding"/>
    <property type="evidence" value="ECO:0007669"/>
    <property type="project" value="UniProtKB-KW"/>
</dbReference>
<dbReference type="GO" id="GO:0006798">
    <property type="term" value="P:polyphosphate catabolic process"/>
    <property type="evidence" value="ECO:0000314"/>
    <property type="project" value="SGD"/>
</dbReference>
<dbReference type="GO" id="GO:0006797">
    <property type="term" value="P:polyphosphate metabolic process"/>
    <property type="evidence" value="ECO:0000314"/>
    <property type="project" value="SGD"/>
</dbReference>
<dbReference type="CDD" id="cd00842">
    <property type="entry name" value="MPP_ASMase"/>
    <property type="match status" value="1"/>
</dbReference>
<dbReference type="InterPro" id="IPR041805">
    <property type="entry name" value="ASMase/PPN1_MPP"/>
</dbReference>
<dbReference type="InterPro" id="IPR004843">
    <property type="entry name" value="Calcineurin-like_PHP_ApaH"/>
</dbReference>
<dbReference type="InterPro" id="IPR012358">
    <property type="entry name" value="EndopolyPtase_N1"/>
</dbReference>
<dbReference type="InterPro" id="IPR029052">
    <property type="entry name" value="Metallo-depent_PP-like"/>
</dbReference>
<dbReference type="PANTHER" id="PTHR10340:SF55">
    <property type="entry name" value="ENDOPOLYPHOSPHATASE"/>
    <property type="match status" value="1"/>
</dbReference>
<dbReference type="PANTHER" id="PTHR10340">
    <property type="entry name" value="SPHINGOMYELIN PHOSPHODIESTERASE"/>
    <property type="match status" value="1"/>
</dbReference>
<dbReference type="Pfam" id="PF00149">
    <property type="entry name" value="Metallophos"/>
    <property type="match status" value="1"/>
</dbReference>
<dbReference type="PIRSF" id="PIRSF027093">
    <property type="entry name" value="EndopolyPtase_N1"/>
    <property type="match status" value="1"/>
</dbReference>
<dbReference type="SUPFAM" id="SSF56300">
    <property type="entry name" value="Metallo-dependent phosphatases"/>
    <property type="match status" value="1"/>
</dbReference>
<name>PPN1_YEAST</name>
<proteinExistence type="evidence at protein level"/>
<keyword id="KW-0963">Cytoplasm</keyword>
<keyword id="KW-0903">Direct protein sequencing</keyword>
<keyword id="KW-0325">Glycoprotein</keyword>
<keyword id="KW-0378">Hydrolase</keyword>
<keyword id="KW-1017">Isopeptide bond</keyword>
<keyword id="KW-0472">Membrane</keyword>
<keyword id="KW-0479">Metal-binding</keyword>
<keyword id="KW-1185">Reference proteome</keyword>
<keyword id="KW-0735">Signal-anchor</keyword>
<keyword id="KW-0812">Transmembrane</keyword>
<keyword id="KW-1133">Transmembrane helix</keyword>
<keyword id="KW-0832">Ubl conjugation</keyword>
<keyword id="KW-0926">Vacuole</keyword>
<keyword id="KW-0865">Zymogen</keyword>
<comment type="function">
    <text evidence="3 4 10 11 12 16 17 18">Catalyzes the hydrolysis of inorganic polyphosphate (polyP) chains of many hundreds of phosphate residues into shorter lengths. Has both exopolyphosphatase and endopolyphosphatase activities at different ratios depending on divalent cations by cleaving phosphate from the chain end and by fragmenting long-chain polymers into shorter ones, respectively. The limited digestion products are 1 and 3 P(i) residues (PubMed:11102525, PubMed:11447286, PubMed:15170373, PubMed:15342119, PubMed:15792812, PubMed:31175919, PubMed:8900207, Ref.16). Also releases phosphate from dATP. dATP phosphohydrolase activity is about 7-fold lower than the exopolyphosphatase activity (Ref.16).</text>
</comment>
<comment type="catalytic activity">
    <reaction evidence="12 16">
        <text>[phosphate](n+1) + n H2O = (n+1) phosphate + n H(+)</text>
        <dbReference type="Rhea" id="RHEA:22452"/>
        <dbReference type="Rhea" id="RHEA-COMP:14280"/>
        <dbReference type="ChEBI" id="CHEBI:15377"/>
        <dbReference type="ChEBI" id="CHEBI:15378"/>
        <dbReference type="ChEBI" id="CHEBI:16838"/>
        <dbReference type="ChEBI" id="CHEBI:43474"/>
        <dbReference type="EC" id="3.6.1.10"/>
    </reaction>
    <physiologicalReaction direction="left-to-right" evidence="16">
        <dbReference type="Rhea" id="RHEA:22453"/>
    </physiologicalReaction>
</comment>
<comment type="catalytic activity">
    <reaction evidence="10 16">
        <text>[phosphate](n) + H2O = [phosphate](n-1) + phosphate + H(+)</text>
        <dbReference type="Rhea" id="RHEA:21528"/>
        <dbReference type="Rhea" id="RHEA-COMP:9859"/>
        <dbReference type="Rhea" id="RHEA-COMP:14279"/>
        <dbReference type="ChEBI" id="CHEBI:15377"/>
        <dbReference type="ChEBI" id="CHEBI:15378"/>
        <dbReference type="ChEBI" id="CHEBI:16838"/>
        <dbReference type="ChEBI" id="CHEBI:43474"/>
        <dbReference type="EC" id="3.6.1.11"/>
    </reaction>
    <physiologicalReaction direction="left-to-right" evidence="16">
        <dbReference type="Rhea" id="RHEA:21529"/>
    </physiologicalReaction>
</comment>
<comment type="catalytic activity">
    <reaction evidence="18">
        <text>dATP + H2O = dADP + phosphate + H(+)</text>
        <dbReference type="Rhea" id="RHEA:51908"/>
        <dbReference type="ChEBI" id="CHEBI:15377"/>
        <dbReference type="ChEBI" id="CHEBI:15378"/>
        <dbReference type="ChEBI" id="CHEBI:43474"/>
        <dbReference type="ChEBI" id="CHEBI:57667"/>
        <dbReference type="ChEBI" id="CHEBI:61404"/>
    </reaction>
</comment>
<comment type="cofactor">
    <cofactor evidence="17">
        <name>Mn(2+)</name>
        <dbReference type="ChEBI" id="CHEBI:29035"/>
    </cofactor>
    <cofactor evidence="16 17">
        <name>Mg(2+)</name>
        <dbReference type="ChEBI" id="CHEBI:18420"/>
    </cofactor>
    <cofactor evidence="18">
        <name>Co(2+)</name>
        <dbReference type="ChEBI" id="CHEBI:48828"/>
    </cofactor>
    <cofactor evidence="16">
        <name>Zn(2+)</name>
        <dbReference type="ChEBI" id="CHEBI:29105"/>
    </cofactor>
    <text evidence="14 17 18 25">Divalent metal cations. Exopolyphosphatase activity is predominant in the presence of Co(2+), while endopolyphosphatase activity is predominant in the presence of Mg(2+) (PubMed:25742176, PubMed:8900207). Co(2+) is more effective than Mn(2+) for dATP phosphohydrolase activity (Ref.16). The yeast vacuole plays an important role in Zn(2+) storing and sequestering. Therefore, the changes in Zn(2+) concentration may regulate the enzyme's activity (Probable).</text>
</comment>
<comment type="activity regulation">
    <text evidence="10 16">Inhibited by heparin and EDTA.</text>
</comment>
<comment type="biophysicochemical properties">
    <kinetics>
        <KM evidence="17">185 nM for polyP(750)</KM>
        <KM evidence="10">3.5 uM for polyP(208)</KM>
        <KM evidence="10">75 uM for polyP(15)</KM>
        <KM evidence="10">1100 uM for polyP(3)</KM>
        <KM evidence="18">0.88 mM for dATP</KM>
        <Vmax evidence="16">530.0 umol/min/mg enzyme with polyP(208) as substrate for the exopolyphosphatase reaction</Vmax>
    </kinetics>
    <phDependence>
        <text evidence="17">Optimum pH is about 7.5.</text>
    </phDependence>
</comment>
<comment type="subunit">
    <text evidence="12 15">Homotetramer (PubMed:15792812). Interacts with PPN2 (PubMed:28302909).</text>
</comment>
<comment type="subcellular location">
    <subcellularLocation>
        <location evidence="5 6 7 9 17">Vacuole membrane</location>
        <topology evidence="5 6 7 9 17">Single-pass type II membrane protein</topology>
    </subcellularLocation>
    <subcellularLocation>
        <location evidence="13">Cytoplasm</location>
    </subcellularLocation>
    <text evidence="13">The cytoplasmic form appears in the cytosol during the transition of cells from stationary growth phase to new budding on glucose addition and phosphate excess.</text>
</comment>
<comment type="domain">
    <text evidence="5">The transmembrane domain contains polar residues that mediate the recognition by TUL1.</text>
</comment>
<comment type="PTM">
    <text evidence="23">Processing by proteases in the vacuole is required for activation.</text>
</comment>
<comment type="PTM">
    <text evidence="5">Ubiquitinated. Ubiquitination mediates sorting into internal vesicles in late endosomes. TUL1 and RSP5 are required for ubiquitination. Other cytoplasmic Lys residues than Lys-6 may also be ubiquitinated.</text>
</comment>
<comment type="PTM">
    <text evidence="12 22">N-glycosylated (Probable). N-glycosylation is essential for the protease-mediated maturation.</text>
</comment>
<comment type="miscellaneous">
    <text>Inactivation of PPN1 leads to the inhibition of expression of both exopolyphosphatase PPX1 and high-molecular-mass exopolyphosphatase not encoded by PPX1.</text>
</comment>
<comment type="miscellaneous">
    <text evidence="8">Present with 319 molecules/cell in log phase SD medium.</text>
</comment>
<comment type="similarity">
    <text evidence="22">Belongs to the endopolyphosphatase PPN1 family.</text>
</comment>
<evidence type="ECO:0000255" key="1"/>
<evidence type="ECO:0000256" key="2">
    <source>
        <dbReference type="SAM" id="MobiDB-lite"/>
    </source>
</evidence>
<evidence type="ECO:0000269" key="3">
    <source>
    </source>
</evidence>
<evidence type="ECO:0000269" key="4">
    <source>
    </source>
</evidence>
<evidence type="ECO:0000269" key="5">
    <source>
    </source>
</evidence>
<evidence type="ECO:0000269" key="6">
    <source>
    </source>
</evidence>
<evidence type="ECO:0000269" key="7">
    <source>
    </source>
</evidence>
<evidence type="ECO:0000269" key="8">
    <source>
    </source>
</evidence>
<evidence type="ECO:0000269" key="9">
    <source>
    </source>
</evidence>
<evidence type="ECO:0000269" key="10">
    <source>
    </source>
</evidence>
<evidence type="ECO:0000269" key="11">
    <source>
    </source>
</evidence>
<evidence type="ECO:0000269" key="12">
    <source>
    </source>
</evidence>
<evidence type="ECO:0000269" key="13">
    <source>
    </source>
</evidence>
<evidence type="ECO:0000269" key="14">
    <source>
    </source>
</evidence>
<evidence type="ECO:0000269" key="15">
    <source>
    </source>
</evidence>
<evidence type="ECO:0000269" key="16">
    <source>
    </source>
</evidence>
<evidence type="ECO:0000269" key="17">
    <source>
    </source>
</evidence>
<evidence type="ECO:0000269" key="18">
    <source ref="16"/>
</evidence>
<evidence type="ECO:0000303" key="19">
    <source>
    </source>
</evidence>
<evidence type="ECO:0000303" key="20">
    <source>
    </source>
</evidence>
<evidence type="ECO:0000303" key="21">
    <source ref="16"/>
</evidence>
<evidence type="ECO:0000305" key="22"/>
<evidence type="ECO:0000305" key="23">
    <source>
    </source>
</evidence>
<evidence type="ECO:0000305" key="24">
    <source>
    </source>
</evidence>
<evidence type="ECO:0000305" key="25">
    <source>
    </source>
</evidence>
<evidence type="ECO:0000312" key="26">
    <source>
        <dbReference type="SGD" id="S000002860"/>
    </source>
</evidence>
<protein>
    <recommendedName>
        <fullName evidence="20">Endopolyphosphatase</fullName>
        <ecNumber evidence="12">3.6.1.10</ecNumber>
    </recommendedName>
    <alternativeName>
        <fullName evidence="21">Deoxyadenosine triphosphate phosphohydrolase</fullName>
        <shortName evidence="21">dATP phosphohydrolase</shortName>
        <ecNumber evidence="18">3.6.1.-</ecNumber>
    </alternativeName>
    <alternativeName>
        <fullName>Exopolyphosphatase</fullName>
        <ecNumber evidence="10">3.6.1.11</ecNumber>
    </alternativeName>
    <alternativeName>
        <fullName evidence="19">Phosphate metabolism protein 5</fullName>
    </alternativeName>
</protein>
<accession>Q04119</accession>
<accession>D6VT77</accession>
<feature type="propeptide" id="PRO_0000022089" description="Removed in mature form" evidence="12">
    <location>
        <begin position="1"/>
        <end position="83"/>
    </location>
</feature>
<feature type="chain" id="PRO_0000022090" description="Endopolyphosphatase">
    <location>
        <begin position="84"/>
        <end position="384"/>
    </location>
</feature>
<feature type="propeptide" id="PRO_0000022091" description="Removed in mature form" evidence="12">
    <location>
        <begin position="385"/>
        <end position="674"/>
    </location>
</feature>
<feature type="topological domain" description="Cytoplasmic" evidence="1">
    <location>
        <begin position="1"/>
        <end position="21"/>
    </location>
</feature>
<feature type="transmembrane region" description="Helical; Signal-anchor for type II membrane protein" evidence="1">
    <location>
        <begin position="22"/>
        <end position="42"/>
    </location>
</feature>
<feature type="topological domain" description="Vacuolar" evidence="1">
    <location>
        <begin position="43"/>
        <end position="674"/>
    </location>
</feature>
<feature type="region of interest" description="Disordered" evidence="2">
    <location>
        <begin position="384"/>
        <end position="403"/>
    </location>
</feature>
<feature type="glycosylation site" description="N-linked (GlcNAc...) asparagine" evidence="1">
    <location>
        <position position="58"/>
    </location>
</feature>
<feature type="glycosylation site" description="N-linked (GlcNAc...) asparagine" evidence="1">
    <location>
        <position position="505"/>
    </location>
</feature>
<feature type="glycosylation site" description="N-linked (GlcNAc...) asparagine" evidence="1">
    <location>
        <position position="511"/>
    </location>
</feature>
<feature type="cross-link" description="Glycyl lysine isopeptide (Lys-Gly) (interchain with G-Cter in ubiquitin)" evidence="24">
    <location>
        <position position="6"/>
    </location>
</feature>
<feature type="mutagenesis site" description="Causes accumulation in vacuoles and abolishes sorting into internal vesicles in late endosomes." evidence="5">
    <original>K</original>
    <variation>R</variation>
    <variation>G</variation>
    <location>
        <position position="6"/>
    </location>
</feature>
<feature type="mutagenesis site" description="Abolishes enzyme activity; when associated with A-505 and A-511." evidence="12">
    <original>N</original>
    <variation>A</variation>
    <location>
        <position position="11"/>
    </location>
</feature>
<feature type="mutagenesis site" description="Abolishes enzyme activity; when associated with A-11 and A-511." evidence="12">
    <original>N</original>
    <variation>A</variation>
    <location>
        <position position="505"/>
    </location>
</feature>
<feature type="mutagenesis site" description="Abolishes enzyme activity; when associated with A-11 and A-505." evidence="12">
    <original>N</original>
    <variation>A</variation>
    <location>
        <position position="511"/>
    </location>
</feature>
<sequence length="674" mass="78344">MVVVGKSEVRNVSMSRPKKKSLIAILSTCVLFFLVFIIGAKFQYVSVFSKFLDDRGDNESLQLLNDIEFTRLGLTPREPVIIKDVKTGKERKLHGRFLHITDIHPDPYYVEGSSIDAVCHTGKPSKKKDVAPKFGKAMSGCDSPVILMEETLRWIKENLRDKIDFVIWTGDNIRHDNDRKHPRTEAQIFDMNNIVADKMTELFSAGNEEDPRDFDVSVIPSLGNNDVFPHNMFALGPTLQTREYYRIWKNFVPQQQQRTFDRSASFLTEVIPGKLAVLSINTLYLFKANPLVDNCNSKKEPGYQLLLWFGYVLEELRSRGMKVWLSGHVPPIAKNFDQSCYDKFTLWTHEYRDIIIGGLYGHMNIDHFIPTDGKKARKSLLKAMEQSTRVQQGEDSNEEDEETELNRILDHAMAAKEVFLMGAKPSNKEAYMNTVRDTYYRKVWNKLERVDEKNVENEKKKKEKKDKKKKKPITRKELIERYSIVNIGGSVIPTFNPSFRIWEYNITDIVNDSNFAVSEYKPWDEFFESLNKIMEDSLLEDEMDSSNIEVGINREKMGEKKNKKKKKNDKTMPIEMPDKYELGPAYVPQLFTPTRFVQFYADLEKINQELHNSFVESKDIFRYEIEYTSDEKPYSMDSLTVGSYLDLAGRLYENKPAWEKYVEWSFASSGYKDD</sequence>
<organism>
    <name type="scientific">Saccharomyces cerevisiae (strain ATCC 204508 / S288c)</name>
    <name type="common">Baker's yeast</name>
    <dbReference type="NCBI Taxonomy" id="559292"/>
    <lineage>
        <taxon>Eukaryota</taxon>
        <taxon>Fungi</taxon>
        <taxon>Dikarya</taxon>
        <taxon>Ascomycota</taxon>
        <taxon>Saccharomycotina</taxon>
        <taxon>Saccharomycetes</taxon>
        <taxon>Saccharomycetales</taxon>
        <taxon>Saccharomycetaceae</taxon>
        <taxon>Saccharomyces</taxon>
    </lineage>
</organism>